<proteinExistence type="inferred from homology"/>
<name>NU5C_CICIN</name>
<comment type="function">
    <text evidence="1">NDH shuttles electrons from NAD(P)H:plastoquinone, via FMN and iron-sulfur (Fe-S) centers, to quinones in the photosynthetic chain and possibly in a chloroplast respiratory chain. The immediate electron acceptor for the enzyme in this species is believed to be plastoquinone. Couples the redox reaction to proton translocation, and thus conserves the redox energy in a proton gradient (By similarity).</text>
</comment>
<comment type="catalytic activity">
    <reaction>
        <text>a plastoquinone + NADH + (n+1) H(+)(in) = a plastoquinol + NAD(+) + n H(+)(out)</text>
        <dbReference type="Rhea" id="RHEA:42608"/>
        <dbReference type="Rhea" id="RHEA-COMP:9561"/>
        <dbReference type="Rhea" id="RHEA-COMP:9562"/>
        <dbReference type="ChEBI" id="CHEBI:15378"/>
        <dbReference type="ChEBI" id="CHEBI:17757"/>
        <dbReference type="ChEBI" id="CHEBI:57540"/>
        <dbReference type="ChEBI" id="CHEBI:57945"/>
        <dbReference type="ChEBI" id="CHEBI:62192"/>
    </reaction>
</comment>
<comment type="catalytic activity">
    <reaction>
        <text>a plastoquinone + NADPH + (n+1) H(+)(in) = a plastoquinol + NADP(+) + n H(+)(out)</text>
        <dbReference type="Rhea" id="RHEA:42612"/>
        <dbReference type="Rhea" id="RHEA-COMP:9561"/>
        <dbReference type="Rhea" id="RHEA-COMP:9562"/>
        <dbReference type="ChEBI" id="CHEBI:15378"/>
        <dbReference type="ChEBI" id="CHEBI:17757"/>
        <dbReference type="ChEBI" id="CHEBI:57783"/>
        <dbReference type="ChEBI" id="CHEBI:58349"/>
        <dbReference type="ChEBI" id="CHEBI:62192"/>
    </reaction>
</comment>
<comment type="subunit">
    <text evidence="1">NDH is composed of at least 16 different subunits, 5 of which are encoded in the nucleus.</text>
</comment>
<comment type="subcellular location">
    <subcellularLocation>
        <location evidence="1">Plastid</location>
        <location evidence="1">Chloroplast thylakoid membrane</location>
        <topology evidence="1">Multi-pass membrane protein</topology>
    </subcellularLocation>
</comment>
<comment type="similarity">
    <text evidence="3">Belongs to the complex I subunit 5 family.</text>
</comment>
<feature type="chain" id="PRO_0000118180" description="NAD(P)H-quinone oxidoreductase subunit 5, chloroplastic">
    <location>
        <begin position="1"/>
        <end position="741"/>
    </location>
</feature>
<feature type="transmembrane region" description="Helical" evidence="2">
    <location>
        <begin position="9"/>
        <end position="29"/>
    </location>
</feature>
<feature type="transmembrane region" description="Helical" evidence="2">
    <location>
        <begin position="40"/>
        <end position="60"/>
    </location>
</feature>
<feature type="transmembrane region" description="Helical" evidence="2">
    <location>
        <begin position="89"/>
        <end position="109"/>
    </location>
</feature>
<feature type="transmembrane region" description="Helical" evidence="2">
    <location>
        <begin position="125"/>
        <end position="145"/>
    </location>
</feature>
<feature type="transmembrane region" description="Helical" evidence="2">
    <location>
        <begin position="147"/>
        <end position="167"/>
    </location>
</feature>
<feature type="transmembrane region" description="Helical" evidence="2">
    <location>
        <begin position="185"/>
        <end position="205"/>
    </location>
</feature>
<feature type="transmembrane region" description="Helical" evidence="2">
    <location>
        <begin position="219"/>
        <end position="239"/>
    </location>
</feature>
<feature type="transmembrane region" description="Helical" evidence="2">
    <location>
        <begin position="258"/>
        <end position="278"/>
    </location>
</feature>
<feature type="transmembrane region" description="Helical" evidence="2">
    <location>
        <begin position="283"/>
        <end position="303"/>
    </location>
</feature>
<feature type="transmembrane region" description="Helical" evidence="2">
    <location>
        <begin position="327"/>
        <end position="347"/>
    </location>
</feature>
<feature type="transmembrane region" description="Helical" evidence="2">
    <location>
        <begin position="354"/>
        <end position="374"/>
    </location>
</feature>
<feature type="transmembrane region" description="Helical" evidence="2">
    <location>
        <begin position="396"/>
        <end position="416"/>
    </location>
</feature>
<feature type="transmembrane region" description="Helical" evidence="2">
    <location>
        <begin position="425"/>
        <end position="445"/>
    </location>
</feature>
<feature type="transmembrane region" description="Helical" evidence="2">
    <location>
        <begin position="549"/>
        <end position="569"/>
    </location>
</feature>
<feature type="transmembrane region" description="Helical" evidence="2">
    <location>
        <begin position="605"/>
        <end position="625"/>
    </location>
</feature>
<feature type="transmembrane region" description="Helical" evidence="2">
    <location>
        <begin position="721"/>
        <end position="741"/>
    </location>
</feature>
<reference key="1">
    <citation type="journal article" date="1995" name="Proc. Natl. Acad. Sci. U.S.A.">
        <title>ndhF sequence evolution and the major clades in the sunflower family.</title>
        <authorList>
            <person name="Kim K.-J."/>
            <person name="Jansen R.K."/>
        </authorList>
    </citation>
    <scope>NUCLEOTIDE SEQUENCE [GENOMIC DNA]</scope>
</reference>
<keyword id="KW-0150">Chloroplast</keyword>
<keyword id="KW-0472">Membrane</keyword>
<keyword id="KW-0520">NAD</keyword>
<keyword id="KW-0521">NADP</keyword>
<keyword id="KW-0934">Plastid</keyword>
<keyword id="KW-0618">Plastoquinone</keyword>
<keyword id="KW-0874">Quinone</keyword>
<keyword id="KW-0793">Thylakoid</keyword>
<keyword id="KW-1278">Translocase</keyword>
<keyword id="KW-0812">Transmembrane</keyword>
<keyword id="KW-1133">Transmembrane helix</keyword>
<keyword id="KW-0813">Transport</keyword>
<dbReference type="EC" id="7.1.1.-"/>
<dbReference type="EMBL" id="L39390">
    <property type="protein sequence ID" value="AAC37446.1"/>
    <property type="molecule type" value="Genomic_DNA"/>
</dbReference>
<dbReference type="PIR" id="T12711">
    <property type="entry name" value="T12711"/>
</dbReference>
<dbReference type="SMR" id="Q32007"/>
<dbReference type="GO" id="GO:0009535">
    <property type="term" value="C:chloroplast thylakoid membrane"/>
    <property type="evidence" value="ECO:0007669"/>
    <property type="project" value="UniProtKB-SubCell"/>
</dbReference>
<dbReference type="GO" id="GO:0008137">
    <property type="term" value="F:NADH dehydrogenase (ubiquinone) activity"/>
    <property type="evidence" value="ECO:0007669"/>
    <property type="project" value="InterPro"/>
</dbReference>
<dbReference type="GO" id="GO:0048038">
    <property type="term" value="F:quinone binding"/>
    <property type="evidence" value="ECO:0007669"/>
    <property type="project" value="UniProtKB-KW"/>
</dbReference>
<dbReference type="GO" id="GO:0042773">
    <property type="term" value="P:ATP synthesis coupled electron transport"/>
    <property type="evidence" value="ECO:0007669"/>
    <property type="project" value="InterPro"/>
</dbReference>
<dbReference type="GO" id="GO:0015990">
    <property type="term" value="P:electron transport coupled proton transport"/>
    <property type="evidence" value="ECO:0007669"/>
    <property type="project" value="TreeGrafter"/>
</dbReference>
<dbReference type="Gene3D" id="1.20.5.2700">
    <property type="match status" value="1"/>
</dbReference>
<dbReference type="InterPro" id="IPR002128">
    <property type="entry name" value="NADH_UbQ_OxRdtase_chlpt_su5_C"/>
</dbReference>
<dbReference type="InterPro" id="IPR018393">
    <property type="entry name" value="NADHpl_OxRdtase_5_subgr"/>
</dbReference>
<dbReference type="InterPro" id="IPR001750">
    <property type="entry name" value="ND/Mrp_TM"/>
</dbReference>
<dbReference type="InterPro" id="IPR003945">
    <property type="entry name" value="NU5C-like"/>
</dbReference>
<dbReference type="InterPro" id="IPR001516">
    <property type="entry name" value="Proton_antipo_N"/>
</dbReference>
<dbReference type="NCBIfam" id="TIGR01974">
    <property type="entry name" value="NDH_I_L"/>
    <property type="match status" value="1"/>
</dbReference>
<dbReference type="NCBIfam" id="NF005141">
    <property type="entry name" value="PRK06590.1"/>
    <property type="match status" value="1"/>
</dbReference>
<dbReference type="PANTHER" id="PTHR42829">
    <property type="entry name" value="NADH-UBIQUINONE OXIDOREDUCTASE CHAIN 5"/>
    <property type="match status" value="1"/>
</dbReference>
<dbReference type="PANTHER" id="PTHR42829:SF2">
    <property type="entry name" value="NADH-UBIQUINONE OXIDOREDUCTASE CHAIN 5"/>
    <property type="match status" value="1"/>
</dbReference>
<dbReference type="Pfam" id="PF01010">
    <property type="entry name" value="Proton_antipo_C"/>
    <property type="match status" value="1"/>
</dbReference>
<dbReference type="Pfam" id="PF00361">
    <property type="entry name" value="Proton_antipo_M"/>
    <property type="match status" value="1"/>
</dbReference>
<dbReference type="Pfam" id="PF00662">
    <property type="entry name" value="Proton_antipo_N"/>
    <property type="match status" value="1"/>
</dbReference>
<dbReference type="PRINTS" id="PR01434">
    <property type="entry name" value="NADHDHGNASE5"/>
</dbReference>
<dbReference type="PRINTS" id="PR01435">
    <property type="entry name" value="NPOXDRDTASE5"/>
</dbReference>
<geneLocation type="chloroplast"/>
<organism>
    <name type="scientific">Cichorium intybus</name>
    <name type="common">Chicory</name>
    <dbReference type="NCBI Taxonomy" id="13427"/>
    <lineage>
        <taxon>Eukaryota</taxon>
        <taxon>Viridiplantae</taxon>
        <taxon>Streptophyta</taxon>
        <taxon>Embryophyta</taxon>
        <taxon>Tracheophyta</taxon>
        <taxon>Spermatophyta</taxon>
        <taxon>Magnoliopsida</taxon>
        <taxon>eudicotyledons</taxon>
        <taxon>Gunneridae</taxon>
        <taxon>Pentapetalae</taxon>
        <taxon>asterids</taxon>
        <taxon>campanulids</taxon>
        <taxon>Asterales</taxon>
        <taxon>Asteraceae</taxon>
        <taxon>Cichorioideae</taxon>
        <taxon>Cichorieae</taxon>
        <taxon>Cichoriinae</taxon>
        <taxon>Cichorium</taxon>
    </lineage>
</organism>
<protein>
    <recommendedName>
        <fullName>NAD(P)H-quinone oxidoreductase subunit 5, chloroplastic</fullName>
        <ecNumber>7.1.1.-</ecNumber>
    </recommendedName>
    <alternativeName>
        <fullName>NAD(P)H dehydrogenase subunit 5</fullName>
    </alternativeName>
    <alternativeName>
        <fullName>NADH-plastoquinone oxidoreductase subunit 5</fullName>
    </alternativeName>
</protein>
<gene>
    <name type="primary">ndhF</name>
</gene>
<evidence type="ECO:0000250" key="1"/>
<evidence type="ECO:0000255" key="2"/>
<evidence type="ECO:0000305" key="3"/>
<accession>Q32007</accession>
<sequence length="741" mass="84267">MEQTYQYAWIIPFLPLPVPMLIGLGLLLFPTATKSLRRMWAFQSVFLLSIVMILSMNLSIQQINSSSVYQYVWSWIINNDFSLEFGYLIDPLTSIMSILITTVGIMVLIYSDNYMSHDHGYLRFFAYMSFFSTSMLGLVTSSNLIQIYIFWELVGVCSYLLIGFWFTRPVAAKACQKAFVTNRVGDFGLLLGILGFYWITGSFEFSDLFQIFNNLISNNEVNFLFVTLCAILLFAGAIAKSAQFPLHVWLPDAMEGPTPISALIHAATMVAAGIFLVARLMPLFIVIPHIMNFISLIGIITVFLGATLALAQKDIKRGLAYSTMSQLGYMMLALGMGSYRSALFHLITHAYSKALLFLGSGSVIHSMETLVGYCPKKSQNMVLMGGLTKHVPITKNSFLLGTLSLCGIPPLACFWSKDEILNDSWLYSPIFGIIAWSTAGLTAFYMCRIYLLTFEGHLNVHFQNYSGKSNTPFYSISLWGKEGSKISNKNFRLLTLLKMNKNARPSFFSNRVYKIDENVRNRIQPFLSIPHFGNTKTYSYPYESDNTMLFPILVLILFTLFVGFLGIPFTQDVDILSKWLTPSINLLHKNSNNLIDWYEFSKDAFFSVSIASFGIFIAFFLYKPVYSTFQNLDFLNAFVKMGPNRIFYDKIKNAIYDWSYNRGYIDAFYGRFLTAGMRKLADFAHFFDRRIIDAIPNGVGLMSFFLAEVIKSVGGGRISSYLFFYFSYVAIFLLIYYFFNL</sequence>